<protein>
    <recommendedName>
        <fullName>Protein virB1</fullName>
    </recommendedName>
</protein>
<sequence length="239" mass="25952">MFKRSGSLSLALMSSFCSSSLATPLSSAEFDHVARKCAPSVATSTLAAIAKVESRFDPLAIHDNTTGETLHWQDHTQATQVVRHRLDARHSLDVGLMQINSRNFSMLGLTPDGALKACPSLSAAANMLKSRYAGGETIDEKQIALRRAISAYNTGNFIRGFANGYVRKVETAAQSLVPALIEPPQDDHKALKSEDTWDVWGSYQRRSQEDGVGGSIAPQPPDQDNGKSADDNQVLFDLY</sequence>
<dbReference type="EMBL" id="J03216">
    <property type="protein sequence ID" value="AAA88645.1"/>
    <property type="molecule type" value="Genomic_DNA"/>
</dbReference>
<dbReference type="PIR" id="S00777">
    <property type="entry name" value="B1AG55"/>
</dbReference>
<dbReference type="RefSeq" id="NP_059799.1">
    <property type="nucleotide sequence ID" value="NC_002377.1"/>
</dbReference>
<dbReference type="RefSeq" id="WP_010892487.1">
    <property type="nucleotide sequence ID" value="NZ_QSNU01000012.1"/>
</dbReference>
<dbReference type="OrthoDB" id="8277605at2"/>
<dbReference type="CDD" id="cd16892">
    <property type="entry name" value="LT_VirB1-like"/>
    <property type="match status" value="1"/>
</dbReference>
<dbReference type="Gene3D" id="1.10.530.10">
    <property type="match status" value="1"/>
</dbReference>
<dbReference type="InterPro" id="IPR023346">
    <property type="entry name" value="Lysozyme-like_dom_sf"/>
</dbReference>
<dbReference type="InterPro" id="IPR008258">
    <property type="entry name" value="Transglycosylase_SLT_dom_1"/>
</dbReference>
<dbReference type="NCBIfam" id="NF010438">
    <property type="entry name" value="PRK13864.1"/>
    <property type="match status" value="1"/>
</dbReference>
<dbReference type="Pfam" id="PF01464">
    <property type="entry name" value="SLT"/>
    <property type="match status" value="1"/>
</dbReference>
<dbReference type="SUPFAM" id="SSF53955">
    <property type="entry name" value="Lysozyme-like"/>
    <property type="match status" value="1"/>
</dbReference>
<feature type="signal peptide" evidence="1">
    <location>
        <begin position="1"/>
        <end position="28"/>
    </location>
</feature>
<feature type="chain" id="PRO_0000022659" description="Protein virB1">
    <location>
        <begin position="29"/>
        <end position="239"/>
    </location>
</feature>
<feature type="region of interest" description="Disordered" evidence="2">
    <location>
        <begin position="202"/>
        <end position="232"/>
    </location>
</feature>
<organism>
    <name type="scientific">Rhizobium radiobacter</name>
    <name type="common">Agrobacterium tumefaciens</name>
    <name type="synonym">Agrobacterium radiobacter</name>
    <dbReference type="NCBI Taxonomy" id="358"/>
    <lineage>
        <taxon>Bacteria</taxon>
        <taxon>Pseudomonadati</taxon>
        <taxon>Pseudomonadota</taxon>
        <taxon>Alphaproteobacteria</taxon>
        <taxon>Hyphomicrobiales</taxon>
        <taxon>Rhizobiaceae</taxon>
        <taxon>Rhizobium/Agrobacterium group</taxon>
        <taxon>Agrobacterium</taxon>
        <taxon>Agrobacterium tumefaciens complex</taxon>
    </lineage>
</organism>
<geneLocation type="plasmid">
    <name>pTiA6</name>
</geneLocation>
<proteinExistence type="inferred from homology"/>
<reference key="1">
    <citation type="journal article" date="1988" name="J. Biol. Chem.">
        <title>Characterization of the virB operon from an Agrobacterium tumefaciens Ti plasmid.</title>
        <authorList>
            <person name="Ward J.E."/>
            <person name="Akiyoshi D.E."/>
            <person name="Regier D."/>
            <person name="Datta A."/>
            <person name="Gordon M.P."/>
            <person name="Nester E.W."/>
        </authorList>
    </citation>
    <scope>NUCLEOTIDE SEQUENCE [GENOMIC DNA]</scope>
</reference>
<name>VIRB1_RHIRD</name>
<keyword id="KW-0192">Crown gall tumor</keyword>
<keyword id="KW-0614">Plasmid</keyword>
<keyword id="KW-0732">Signal</keyword>
<comment type="function">
    <text>VirB proteins are suggested to act at the bacterial surface and there play an important role in directing T-DNA transfer to plant cells.</text>
</comment>
<comment type="similarity">
    <text evidence="3">Belongs to the virb1 family.</text>
</comment>
<accession>P0A3V6</accession>
<accession>P05350</accession>
<gene>
    <name type="primary">virB1</name>
</gene>
<evidence type="ECO:0000255" key="1"/>
<evidence type="ECO:0000256" key="2">
    <source>
        <dbReference type="SAM" id="MobiDB-lite"/>
    </source>
</evidence>
<evidence type="ECO:0000305" key="3"/>